<gene>
    <name type="primary">htz1</name>
    <name type="ORF">NFIA_040170</name>
</gene>
<comment type="function">
    <text evidence="1">Variant histone H2A which can replace H2A in some nucleosomes. Nucleosomes wrap and compact DNA into chromatin, limiting DNA accessibility to the cellular machineries which require DNA as a template. Histones thereby play a central role in transcription regulation, DNA repair, DNA replication and chromosomal stability. DNA accessibility is regulated via a complex set of post-translational modifications of histones, also called histone code, and nucleosome remodeling. This variant is enriched at promoters, it may keep them in a repressed state until the appropriate activation signal is received. Near telomeres, it may counteract gene silencing caused by the spread of heterochromatin proteins. Required for the RNA polymerase II and spt15/TBP recruitment to the target genes. Involved in chromosome stability (By similarity).</text>
</comment>
<comment type="subunit">
    <text evidence="1">The nucleosome is a histone octamer containing two molecules each of H2A, H2B, H3 and H4 assembled in one H3-H4 heterotetramer and two H2A-H2B heterodimers. The octamer wraps approximately 147 bp of DNA. H2A or its variant H2A.Z forms a heterodimer with H2B. H2A.Z associates with the vps72/swc2 subunit of the SWR1 chromatin remodeling complex. Also interacts with rbp1/DNA-directed RNA polymerase II largest subunit (By similarity).</text>
</comment>
<comment type="subcellular location">
    <subcellularLocation>
        <location evidence="1">Nucleus</location>
    </subcellularLocation>
    <subcellularLocation>
        <location evidence="1">Chromosome</location>
    </subcellularLocation>
</comment>
<comment type="PTM">
    <text evidence="1">Acetylated once deposited into chromatin.</text>
</comment>
<comment type="similarity">
    <text evidence="3">Belongs to the histone H2A family.</text>
</comment>
<accession>A1D0C1</accession>
<name>H2AZ_NEOFI</name>
<reference key="1">
    <citation type="journal article" date="2008" name="PLoS Genet.">
        <title>Genomic islands in the pathogenic filamentous fungus Aspergillus fumigatus.</title>
        <authorList>
            <person name="Fedorova N.D."/>
            <person name="Khaldi N."/>
            <person name="Joardar V.S."/>
            <person name="Maiti R."/>
            <person name="Amedeo P."/>
            <person name="Anderson M.J."/>
            <person name="Crabtree J."/>
            <person name="Silva J.C."/>
            <person name="Badger J.H."/>
            <person name="Albarraq A."/>
            <person name="Angiuoli S."/>
            <person name="Bussey H."/>
            <person name="Bowyer P."/>
            <person name="Cotty P.J."/>
            <person name="Dyer P.S."/>
            <person name="Egan A."/>
            <person name="Galens K."/>
            <person name="Fraser-Liggett C.M."/>
            <person name="Haas B.J."/>
            <person name="Inman J.M."/>
            <person name="Kent R."/>
            <person name="Lemieux S."/>
            <person name="Malavazi I."/>
            <person name="Orvis J."/>
            <person name="Roemer T."/>
            <person name="Ronning C.M."/>
            <person name="Sundaram J.P."/>
            <person name="Sutton G."/>
            <person name="Turner G."/>
            <person name="Venter J.C."/>
            <person name="White O.R."/>
            <person name="Whitty B.R."/>
            <person name="Youngman P."/>
            <person name="Wolfe K.H."/>
            <person name="Goldman G.H."/>
            <person name="Wortman J.R."/>
            <person name="Jiang B."/>
            <person name="Denning D.W."/>
            <person name="Nierman W.C."/>
        </authorList>
    </citation>
    <scope>NUCLEOTIDE SEQUENCE [LARGE SCALE GENOMIC DNA]</scope>
    <source>
        <strain>ATCC 1020 / DSM 3700 / CBS 544.65 / FGSC A1164 / JCM 1740 / NRRL 181 / WB 181</strain>
    </source>
</reference>
<feature type="chain" id="PRO_0000297726" description="Histone H2A.Z">
    <location>
        <begin position="1"/>
        <end position="138"/>
    </location>
</feature>
<feature type="region of interest" description="Disordered" evidence="2">
    <location>
        <begin position="1"/>
        <end position="32"/>
    </location>
</feature>
<feature type="compositionally biased region" description="Gly residues" evidence="2">
    <location>
        <begin position="1"/>
        <end position="13"/>
    </location>
</feature>
<feature type="modified residue" description="N6-acetyllysine" evidence="1">
    <location>
        <position position="5"/>
    </location>
</feature>
<feature type="modified residue" description="N6-acetyllysine" evidence="1">
    <location>
        <position position="12"/>
    </location>
</feature>
<sequence>MPGGKGKSVGGKAGAKDAAGKTQKSHSAKAGLQFPCGRVKRFLKNNTQNKMRVGAKAAVYVTAVLEYLTAEVLELAGNAAKDLKVKRITPRHLQLAIRGDEELDTLIRATIAFGGVLPRINRALLLKVEQKKKNKSDA</sequence>
<keyword id="KW-0007">Acetylation</keyword>
<keyword id="KW-0158">Chromosome</keyword>
<keyword id="KW-0238">DNA-binding</keyword>
<keyword id="KW-0544">Nucleosome core</keyword>
<keyword id="KW-0539">Nucleus</keyword>
<keyword id="KW-1185">Reference proteome</keyword>
<protein>
    <recommendedName>
        <fullName>Histone H2A.Z</fullName>
    </recommendedName>
</protein>
<dbReference type="EMBL" id="DS027686">
    <property type="protein sequence ID" value="EAW24441.1"/>
    <property type="molecule type" value="Genomic_DNA"/>
</dbReference>
<dbReference type="RefSeq" id="XP_001266338.1">
    <property type="nucleotide sequence ID" value="XM_001266337.1"/>
</dbReference>
<dbReference type="SMR" id="A1D0C1"/>
<dbReference type="STRING" id="331117.A1D0C1"/>
<dbReference type="EnsemblFungi" id="EAW24441">
    <property type="protein sequence ID" value="EAW24441"/>
    <property type="gene ID" value="NFIA_040170"/>
</dbReference>
<dbReference type="GeneID" id="4592943"/>
<dbReference type="KEGG" id="nfi:NFIA_040170"/>
<dbReference type="VEuPathDB" id="FungiDB:NFIA_040170"/>
<dbReference type="eggNOG" id="KOG1757">
    <property type="taxonomic scope" value="Eukaryota"/>
</dbReference>
<dbReference type="HOGENOM" id="CLU_062828_2_1_1"/>
<dbReference type="OMA" id="MNKKGAP"/>
<dbReference type="OrthoDB" id="9421954at2759"/>
<dbReference type="Proteomes" id="UP000006702">
    <property type="component" value="Unassembled WGS sequence"/>
</dbReference>
<dbReference type="GO" id="GO:0000791">
    <property type="term" value="C:euchromatin"/>
    <property type="evidence" value="ECO:0007669"/>
    <property type="project" value="EnsemblFungi"/>
</dbReference>
<dbReference type="GO" id="GO:0000786">
    <property type="term" value="C:nucleosome"/>
    <property type="evidence" value="ECO:0007669"/>
    <property type="project" value="UniProtKB-KW"/>
</dbReference>
<dbReference type="GO" id="GO:0005634">
    <property type="term" value="C:nucleus"/>
    <property type="evidence" value="ECO:0007669"/>
    <property type="project" value="UniProtKB-SubCell"/>
</dbReference>
<dbReference type="GO" id="GO:0031490">
    <property type="term" value="F:chromatin DNA binding"/>
    <property type="evidence" value="ECO:0007669"/>
    <property type="project" value="EnsemblFungi"/>
</dbReference>
<dbReference type="GO" id="GO:0042802">
    <property type="term" value="F:identical protein binding"/>
    <property type="evidence" value="ECO:0007669"/>
    <property type="project" value="EnsemblFungi"/>
</dbReference>
<dbReference type="GO" id="GO:0046982">
    <property type="term" value="F:protein heterodimerization activity"/>
    <property type="evidence" value="ECO:0007669"/>
    <property type="project" value="InterPro"/>
</dbReference>
<dbReference type="GO" id="GO:0000978">
    <property type="term" value="F:RNA polymerase II cis-regulatory region sequence-specific DNA binding"/>
    <property type="evidence" value="ECO:0007669"/>
    <property type="project" value="EnsemblFungi"/>
</dbReference>
<dbReference type="GO" id="GO:0030527">
    <property type="term" value="F:structural constituent of chromatin"/>
    <property type="evidence" value="ECO:0007669"/>
    <property type="project" value="InterPro"/>
</dbReference>
<dbReference type="GO" id="GO:0140898">
    <property type="term" value="P:CENP-A eviction from euchromatin"/>
    <property type="evidence" value="ECO:0007669"/>
    <property type="project" value="EnsemblFungi"/>
</dbReference>
<dbReference type="GO" id="GO:0070481">
    <property type="term" value="P:nuclear-transcribed mRNA catabolic process, non-stop decay"/>
    <property type="evidence" value="ECO:0007669"/>
    <property type="project" value="EnsemblFungi"/>
</dbReference>
<dbReference type="GO" id="GO:0006357">
    <property type="term" value="P:regulation of transcription by RNA polymerase II"/>
    <property type="evidence" value="ECO:0007669"/>
    <property type="project" value="EnsemblFungi"/>
</dbReference>
<dbReference type="GO" id="GO:0030466">
    <property type="term" value="P:silent mating-type cassette heterochromatin formation"/>
    <property type="evidence" value="ECO:0007669"/>
    <property type="project" value="EnsemblFungi"/>
</dbReference>
<dbReference type="GO" id="GO:0006368">
    <property type="term" value="P:transcription elongation by RNA polymerase II"/>
    <property type="evidence" value="ECO:0007669"/>
    <property type="project" value="EnsemblFungi"/>
</dbReference>
<dbReference type="CDD" id="cd00074">
    <property type="entry name" value="HFD_H2A"/>
    <property type="match status" value="1"/>
</dbReference>
<dbReference type="FunFam" id="1.10.20.10:FF:000021">
    <property type="entry name" value="Histone H2A"/>
    <property type="match status" value="1"/>
</dbReference>
<dbReference type="Gene3D" id="1.10.20.10">
    <property type="entry name" value="Histone, subunit A"/>
    <property type="match status" value="1"/>
</dbReference>
<dbReference type="InterPro" id="IPR009072">
    <property type="entry name" value="Histone-fold"/>
</dbReference>
<dbReference type="InterPro" id="IPR002119">
    <property type="entry name" value="Histone_H2A"/>
</dbReference>
<dbReference type="InterPro" id="IPR007125">
    <property type="entry name" value="Histone_H2A/H2B/H3"/>
</dbReference>
<dbReference type="InterPro" id="IPR032454">
    <property type="entry name" value="Histone_H2A_C"/>
</dbReference>
<dbReference type="PANTHER" id="PTHR23430">
    <property type="entry name" value="HISTONE H2A"/>
    <property type="match status" value="1"/>
</dbReference>
<dbReference type="Pfam" id="PF00125">
    <property type="entry name" value="Histone"/>
    <property type="match status" value="1"/>
</dbReference>
<dbReference type="Pfam" id="PF16211">
    <property type="entry name" value="Histone_H2A_C"/>
    <property type="match status" value="1"/>
</dbReference>
<dbReference type="PRINTS" id="PR00620">
    <property type="entry name" value="HISTONEH2A"/>
</dbReference>
<dbReference type="SMART" id="SM00414">
    <property type="entry name" value="H2A"/>
    <property type="match status" value="1"/>
</dbReference>
<dbReference type="SUPFAM" id="SSF47113">
    <property type="entry name" value="Histone-fold"/>
    <property type="match status" value="1"/>
</dbReference>
<evidence type="ECO:0000250" key="1"/>
<evidence type="ECO:0000256" key="2">
    <source>
        <dbReference type="SAM" id="MobiDB-lite"/>
    </source>
</evidence>
<evidence type="ECO:0000305" key="3"/>
<proteinExistence type="inferred from homology"/>
<organism>
    <name type="scientific">Neosartorya fischeri (strain ATCC 1020 / DSM 3700 / CBS 544.65 / FGSC A1164 / JCM 1740 / NRRL 181 / WB 181)</name>
    <name type="common">Aspergillus fischerianus</name>
    <dbReference type="NCBI Taxonomy" id="331117"/>
    <lineage>
        <taxon>Eukaryota</taxon>
        <taxon>Fungi</taxon>
        <taxon>Dikarya</taxon>
        <taxon>Ascomycota</taxon>
        <taxon>Pezizomycotina</taxon>
        <taxon>Eurotiomycetes</taxon>
        <taxon>Eurotiomycetidae</taxon>
        <taxon>Eurotiales</taxon>
        <taxon>Aspergillaceae</taxon>
        <taxon>Aspergillus</taxon>
        <taxon>Aspergillus subgen. Fumigati</taxon>
    </lineage>
</organism>